<proteinExistence type="evidence at protein level"/>
<dbReference type="EMBL" id="FO081202">
    <property type="protein sequence ID" value="CCD69857.1"/>
    <property type="molecule type" value="Genomic_DNA"/>
</dbReference>
<dbReference type="RefSeq" id="NP_495216.1">
    <property type="nucleotide sequence ID" value="NM_062815.8"/>
</dbReference>
<dbReference type="SMR" id="Q9N5M6"/>
<dbReference type="BioGRID" id="39357">
    <property type="interactions" value="11"/>
</dbReference>
<dbReference type="FunCoup" id="Q9N5M6">
    <property type="interactions" value="50"/>
</dbReference>
<dbReference type="IntAct" id="Q9N5M6">
    <property type="interactions" value="4"/>
</dbReference>
<dbReference type="STRING" id="6239.H12I13.4.1"/>
<dbReference type="PaxDb" id="6239-H12I13.4"/>
<dbReference type="PeptideAtlas" id="Q9N5M6"/>
<dbReference type="EnsemblMetazoa" id="H12I13.4.1">
    <property type="protein sequence ID" value="H12I13.4.1"/>
    <property type="gene ID" value="WBGene00001401"/>
</dbReference>
<dbReference type="GeneID" id="174016"/>
<dbReference type="KEGG" id="cel:CELE_H12I13.4"/>
<dbReference type="UCSC" id="H12I13.4">
    <property type="organism name" value="c. elegans"/>
</dbReference>
<dbReference type="AGR" id="WB:WBGene00001401"/>
<dbReference type="CTD" id="174016"/>
<dbReference type="WormBase" id="H12I13.4">
    <property type="protein sequence ID" value="CE20960"/>
    <property type="gene ID" value="WBGene00001401"/>
    <property type="gene designation" value="fbf-1"/>
</dbReference>
<dbReference type="eggNOG" id="KOG1488">
    <property type="taxonomic scope" value="Eukaryota"/>
</dbReference>
<dbReference type="GeneTree" id="ENSGT00970000196043"/>
<dbReference type="HOGENOM" id="CLU_028494_1_0_1"/>
<dbReference type="InParanoid" id="Q9N5M6"/>
<dbReference type="OMA" id="DHANSFQ"/>
<dbReference type="OrthoDB" id="668540at2759"/>
<dbReference type="PhylomeDB" id="Q9N5M6"/>
<dbReference type="PRO" id="PR:Q9N5M6"/>
<dbReference type="Proteomes" id="UP000001940">
    <property type="component" value="Chromosome II"/>
</dbReference>
<dbReference type="Bgee" id="WBGene00001401">
    <property type="expression patterns" value="Expressed in germ line (C elegans) and 3 other cell types or tissues"/>
</dbReference>
<dbReference type="GO" id="GO:0005737">
    <property type="term" value="C:cytoplasm"/>
    <property type="evidence" value="ECO:0000318"/>
    <property type="project" value="GO_Central"/>
</dbReference>
<dbReference type="GO" id="GO:0043073">
    <property type="term" value="C:germ cell nucleus"/>
    <property type="evidence" value="ECO:0000314"/>
    <property type="project" value="WormBase"/>
</dbReference>
<dbReference type="GO" id="GO:0005634">
    <property type="term" value="C:nucleus"/>
    <property type="evidence" value="ECO:0000318"/>
    <property type="project" value="GO_Central"/>
</dbReference>
<dbReference type="GO" id="GO:0048471">
    <property type="term" value="C:perinuclear region of cytoplasm"/>
    <property type="evidence" value="ECO:0000314"/>
    <property type="project" value="WormBase"/>
</dbReference>
<dbReference type="GO" id="GO:0003730">
    <property type="term" value="F:mRNA 3'-UTR binding"/>
    <property type="evidence" value="ECO:0000314"/>
    <property type="project" value="WormBase"/>
</dbReference>
<dbReference type="GO" id="GO:0051729">
    <property type="term" value="P:germline cell cycle switching, mitotic to meiotic cell cycle"/>
    <property type="evidence" value="ECO:0000316"/>
    <property type="project" value="WormBase"/>
</dbReference>
<dbReference type="GO" id="GO:0017148">
    <property type="term" value="P:negative regulation of translation"/>
    <property type="evidence" value="ECO:0000316"/>
    <property type="project" value="WormBase"/>
</dbReference>
<dbReference type="GO" id="GO:0008355">
    <property type="term" value="P:olfactory learning"/>
    <property type="evidence" value="ECO:0000315"/>
    <property type="project" value="WormBase"/>
</dbReference>
<dbReference type="GO" id="GO:0001555">
    <property type="term" value="P:oocyte growth"/>
    <property type="evidence" value="ECO:0000316"/>
    <property type="project" value="UniProtKB"/>
</dbReference>
<dbReference type="GO" id="GO:0010628">
    <property type="term" value="P:positive regulation of gene expression"/>
    <property type="evidence" value="ECO:0000315"/>
    <property type="project" value="WormBase"/>
</dbReference>
<dbReference type="GO" id="GO:0010608">
    <property type="term" value="P:post-transcriptional regulation of gene expression"/>
    <property type="evidence" value="ECO:0000316"/>
    <property type="project" value="WormBase"/>
</dbReference>
<dbReference type="GO" id="GO:0007548">
    <property type="term" value="P:sex differentiation"/>
    <property type="evidence" value="ECO:0007669"/>
    <property type="project" value="UniProtKB-KW"/>
</dbReference>
<dbReference type="FunFam" id="1.25.10.10:FF:000558">
    <property type="entry name" value="Fem-3 mRNA-binding factor 2"/>
    <property type="match status" value="1"/>
</dbReference>
<dbReference type="Gene3D" id="1.25.10.10">
    <property type="entry name" value="Leucine-rich Repeat Variant"/>
    <property type="match status" value="1"/>
</dbReference>
<dbReference type="InterPro" id="IPR011989">
    <property type="entry name" value="ARM-like"/>
</dbReference>
<dbReference type="InterPro" id="IPR016024">
    <property type="entry name" value="ARM-type_fold"/>
</dbReference>
<dbReference type="InterPro" id="IPR033133">
    <property type="entry name" value="PUM-HD"/>
</dbReference>
<dbReference type="InterPro" id="IPR001313">
    <property type="entry name" value="Pumilio_RNA-bd_rpt"/>
</dbReference>
<dbReference type="PANTHER" id="PTHR12537:SF112">
    <property type="entry name" value="FEM-3 MRNA-BINDING FACTOR 1-RELATED"/>
    <property type="match status" value="1"/>
</dbReference>
<dbReference type="PANTHER" id="PTHR12537">
    <property type="entry name" value="RNA BINDING PROTEIN PUMILIO-RELATED"/>
    <property type="match status" value="1"/>
</dbReference>
<dbReference type="Pfam" id="PF00806">
    <property type="entry name" value="PUF"/>
    <property type="match status" value="8"/>
</dbReference>
<dbReference type="SMART" id="SM00025">
    <property type="entry name" value="Pumilio"/>
    <property type="match status" value="8"/>
</dbReference>
<dbReference type="SUPFAM" id="SSF48371">
    <property type="entry name" value="ARM repeat"/>
    <property type="match status" value="1"/>
</dbReference>
<dbReference type="PROSITE" id="PS50302">
    <property type="entry name" value="PUM"/>
    <property type="match status" value="8"/>
</dbReference>
<dbReference type="PROSITE" id="PS50303">
    <property type="entry name" value="PUM_HD"/>
    <property type="match status" value="1"/>
</dbReference>
<protein>
    <recommendedName>
        <fullName>Fem-3 mRNA-binding factor 1</fullName>
    </recommendedName>
</protein>
<gene>
    <name type="primary">fbf-1</name>
    <name type="ORF">H12I13.4</name>
</gene>
<reference key="1">
    <citation type="journal article" date="1998" name="Science">
        <title>Genome sequence of the nematode C. elegans: a platform for investigating biology.</title>
        <authorList>
            <consortium name="The C. elegans sequencing consortium"/>
        </authorList>
    </citation>
    <scope>NUCLEOTIDE SEQUENCE [LARGE SCALE GENOMIC DNA]</scope>
    <source>
        <strain>Bristol N2</strain>
    </source>
</reference>
<reference key="2">
    <citation type="journal article" date="1997" name="Nature">
        <title>A conserved RNA-binding protein that regulates sexual fates in the C. elegans hermaphrodite germ line.</title>
        <authorList>
            <person name="Zhang B."/>
            <person name="Gallegos M."/>
            <person name="Puoti A."/>
            <person name="Durkin E."/>
            <person name="Fields S."/>
            <person name="Kimble J."/>
            <person name="Wickens M.P."/>
        </authorList>
    </citation>
    <scope>FUNCTION</scope>
    <scope>SUBCELLULAR LOCATION</scope>
    <scope>TISSUE SPECIFICITY</scope>
    <scope>DEVELOPMENTAL STAGE</scope>
</reference>
<reference key="3">
    <citation type="journal article" date="2002" name="Dev. Cell">
        <title>GLD-3, a bicaudal-C homolog that inhibits FBF to control germline sex determination in C. elegans.</title>
        <authorList>
            <person name="Eckmann C.R."/>
            <person name="Kraemer B."/>
            <person name="Wickens M."/>
            <person name="Kimble J."/>
        </authorList>
    </citation>
    <scope>INTERACTION WITH GLD-3</scope>
</reference>
<reference key="4">
    <citation type="journal article" date="2004" name="Genetics">
        <title>GLD-3 and control of the mitosis/meiosis decision in the germline of Caenorhabditis elegans.</title>
        <authorList>
            <person name="Eckmann C.R."/>
            <person name="Crittenden S.L."/>
            <person name="Suh N."/>
            <person name="Kimble J."/>
        </authorList>
    </citation>
    <scope>FUNCTION</scope>
</reference>
<reference key="5">
    <citation type="journal article" date="2006" name="EMBO J.">
        <title>LIP-1 phosphatase controls the extent of germline proliferation in Caenorhabditis elegans.</title>
        <authorList>
            <person name="Lee M.H."/>
            <person name="Hook B."/>
            <person name="Lamont L.B."/>
            <person name="Wickens M."/>
            <person name="Kimble J."/>
        </authorList>
    </citation>
    <scope>FUNCTION</scope>
</reference>
<reference key="6">
    <citation type="journal article" date="2011" name="PLoS Genet.">
        <title>Cyclin E and Cdk2 control GLD-1, the mitosis/meiosis decision, and germline stem cells in Caenorhabditis elegans.</title>
        <authorList>
            <person name="Jeong J."/>
            <person name="Verheyden J.M."/>
            <person name="Kimble J."/>
        </authorList>
    </citation>
    <scope>FUNCTION</scope>
</reference>
<reference key="7">
    <citation type="journal article" date="2012" name="Biochim. Biophys. Acta">
        <title>The Ras-ERK MAPK regulatory network controls dedifferentiation in Caenorhabditis elegans germline.</title>
        <authorList>
            <person name="Cha D.S."/>
            <person name="Datla U.S."/>
            <person name="Hollis S.E."/>
            <person name="Kimble J."/>
            <person name="Lee M.H."/>
        </authorList>
    </citation>
    <scope>FUNCTION</scope>
</reference>
<name>FBF1_CAEEL</name>
<sequence length="614" mass="70358">MDQSKMRYTNQFRKTPQKPTSTEVGNHHTPAHSPMAQHETSMWNFNSLNPYFSMLNMNDGMNYARHQQNHIVTSRPPTPLTDLMSLRSFQSFPNVFMPVSRSRTSSFIQSDTDSSRLEPDDFSQNVRYCSTEIDRNNSSSKNDHLKYSRPALSRNSRSFTRSNNVLPTWSLDSNGEMRSRLSLSEVLDSGDLMKFAVDKTGCQFLEKAVKGSLTSYQKFQLFEQVIGRKDDFLKLSTNIFGNYFVQEIIGMSLTTYDDDNIKRQEKLKNFISSQMTDMCLDKFACRVIQSSLQNMDLSLACKLVQALPRDARLIAICVDQNANHVIQKVVAVIPLKNWEFIVDFVATPEHLRQICFDKYGCRVVQTIIEKLTADSINVDLTSAAQHLRERALQRLMTSVTNRCQELATNEYANYIIQHIVSNDDLAVYRECIIEKCLMRNLLSLSQEKFASHVVEKAFLHAPMELLAEMMDEIFDGYMPHPGTGKDALDIMMFHQFGNYVVQCMLTICCDAVSGRRQTKEGSYDHANSFQVWLKKLHSRVTKERHRLSRFSSGKKMIETLAHLRSTHPIYGLQSSGHESFKTDCFSTASEHDGLELEKNGIEEGNLRLMRTFSP</sequence>
<keyword id="KW-0963">Cytoplasm</keyword>
<keyword id="KW-0217">Developmental protein</keyword>
<keyword id="KW-0221">Differentiation</keyword>
<keyword id="KW-1185">Reference proteome</keyword>
<keyword id="KW-0677">Repeat</keyword>
<keyword id="KW-0694">RNA-binding</keyword>
<keyword id="KW-0726">Sexual differentiation</keyword>
<comment type="function">
    <text evidence="1 5 6 7 8 9">RNA-binding protein that binds to the consensus sequence 5'-UGUGCCAUA-3' in mRNA 3'-UTRs (By similarity). Involved in the control of stem cells and sex determination in the C.elegans hermaphrodite germline (PubMed:9393998). May also play a role in the hermaphrodite germline proliferation and oogenesis (PubMed:15454534, PubMed:9393998). Binds specifically to the regulatory region of fem-3 3'-UTR and mediates the sperm/oocyte switch (PubMed:15454534, PubMed:9393998). Negatively regulates gld-3 expression, possibly by directly binding to two sites within the 3'-UTR of gld-3 isoform b (PubMed:15454534, PubMed:9393998). In association with the cye-1/cdk-2 complex, negatively regulates gld-1 expression in the distal germline cells of the mitotic zone (PubMed:21455289). By binding to the 3'-UTR, represses phosphatase lip-1 expression in the distal part of the germline mitotic zone (PubMed:16319922). Suppresses germline tumor formation by preventing the dedifferentiation of secondary spermatocytes (PubMed:22820175).</text>
</comment>
<comment type="subunit">
    <text evidence="4">Interacts (via C-terminus) with gld-3 isoform A in an RNA-independent manner.</text>
</comment>
<comment type="interaction">
    <interactant intactId="EBI-1569950">
        <id>Q9N5M6</id>
    </interactant>
    <interactant intactId="EBI-316645">
        <id>Q03571</id>
        <label>cpb-1</label>
    </interactant>
    <organismsDiffer>false</organismsDiffer>
    <experiments>5</experiments>
</comment>
<comment type="interaction">
    <interactant intactId="EBI-1569950">
        <id>Q9N5M6</id>
    </interactant>
    <interactant intactId="EBI-14989519">
        <id>Q95ZK7-1</id>
        <label>gld-3</label>
    </interactant>
    <organismsDiffer>false</organismsDiffer>
    <experiments>2</experiments>
</comment>
<comment type="interaction">
    <interactant intactId="EBI-1569950">
        <id>Q9N5M6</id>
    </interactant>
    <interactant intactId="EBI-326004">
        <id>O62486</id>
        <label>nos-3</label>
    </interactant>
    <organismsDiffer>false</organismsDiffer>
    <experiments>5</experiments>
</comment>
<comment type="subcellular location">
    <subcellularLocation>
        <location evidence="9">Cytoplasm</location>
    </subcellularLocation>
</comment>
<comment type="tissue specificity">
    <text evidence="9">Expressed specifically in the germline (at protein level).</text>
</comment>
<comment type="developmental stage">
    <text evidence="9">Expression increases in abundance during postembryonic development and peaks during the fourth larval stage.</text>
</comment>
<comment type="miscellaneous">
    <text>Fbf-1 and fbf-2 are &gt;90% identical on both nucleotide and protein sequence level. Experimental approaches often do not distinguish between the two genes, which are collectively referred to as fbf and are considered to be functionally redundant.</text>
</comment>
<feature type="chain" id="PRO_0000075932" description="Fem-3 mRNA-binding factor 1">
    <location>
        <begin position="1"/>
        <end position="614"/>
    </location>
</feature>
<feature type="domain" description="PUM-HD" evidence="2">
    <location>
        <begin position="160"/>
        <end position="564"/>
    </location>
</feature>
<feature type="repeat" description="Pumilio 1">
    <location>
        <begin position="185"/>
        <end position="223"/>
    </location>
</feature>
<feature type="repeat" description="Pumilio 2">
    <location>
        <begin position="224"/>
        <end position="263"/>
    </location>
</feature>
<feature type="repeat" description="Pumilio 3">
    <location>
        <begin position="269"/>
        <end position="305"/>
    </location>
</feature>
<feature type="repeat" description="Pumilio 4">
    <location>
        <begin position="306"/>
        <end position="342"/>
    </location>
</feature>
<feature type="repeat" description="Pumilio 5">
    <location>
        <begin position="343"/>
        <end position="382"/>
    </location>
</feature>
<feature type="repeat" description="Pumilio 6">
    <location>
        <begin position="398"/>
        <end position="434"/>
    </location>
</feature>
<feature type="repeat" description="Pumilio 7">
    <location>
        <begin position="436"/>
        <end position="471"/>
    </location>
</feature>
<feature type="repeat" description="Pumilio 8">
    <location>
        <begin position="483"/>
        <end position="519"/>
    </location>
</feature>
<feature type="region of interest" description="Disordered" evidence="3">
    <location>
        <begin position="1"/>
        <end position="34"/>
    </location>
</feature>
<feature type="region of interest" description="Binding to gld-3 isoform A">
    <location>
        <begin position="283"/>
        <end position="614"/>
    </location>
</feature>
<feature type="compositionally biased region" description="Polar residues" evidence="3">
    <location>
        <begin position="1"/>
        <end position="24"/>
    </location>
</feature>
<organism>
    <name type="scientific">Caenorhabditis elegans</name>
    <dbReference type="NCBI Taxonomy" id="6239"/>
    <lineage>
        <taxon>Eukaryota</taxon>
        <taxon>Metazoa</taxon>
        <taxon>Ecdysozoa</taxon>
        <taxon>Nematoda</taxon>
        <taxon>Chromadorea</taxon>
        <taxon>Rhabditida</taxon>
        <taxon>Rhabditina</taxon>
        <taxon>Rhabditomorpha</taxon>
        <taxon>Rhabditoidea</taxon>
        <taxon>Rhabditidae</taxon>
        <taxon>Peloderinae</taxon>
        <taxon>Caenorhabditis</taxon>
    </lineage>
</organism>
<evidence type="ECO:0000250" key="1">
    <source>
        <dbReference type="UniProtKB" id="Q09312"/>
    </source>
</evidence>
<evidence type="ECO:0000255" key="2">
    <source>
        <dbReference type="PROSITE-ProRule" id="PRU00318"/>
    </source>
</evidence>
<evidence type="ECO:0000256" key="3">
    <source>
        <dbReference type="SAM" id="MobiDB-lite"/>
    </source>
</evidence>
<evidence type="ECO:0000269" key="4">
    <source>
    </source>
</evidence>
<evidence type="ECO:0000269" key="5">
    <source>
    </source>
</evidence>
<evidence type="ECO:0000269" key="6">
    <source>
    </source>
</evidence>
<evidence type="ECO:0000269" key="7">
    <source>
    </source>
</evidence>
<evidence type="ECO:0000269" key="8">
    <source>
    </source>
</evidence>
<evidence type="ECO:0000269" key="9">
    <source>
    </source>
</evidence>
<accession>Q9N5M6</accession>